<gene>
    <name type="ORF">Y39B6A.34</name>
</gene>
<proteinExistence type="inferred from homology"/>
<evidence type="ECO:0000250" key="1">
    <source>
        <dbReference type="UniProtKB" id="Q96IL0"/>
    </source>
</evidence>
<evidence type="ECO:0000250" key="2">
    <source>
        <dbReference type="UniProtKB" id="Q9CQW7"/>
    </source>
</evidence>
<evidence type="ECO:0000255" key="3"/>
<evidence type="ECO:0000305" key="4"/>
<reference key="1">
    <citation type="journal article" date="1998" name="Science">
        <title>Genome sequence of the nematode C. elegans: a platform for investigating biology.</title>
        <authorList>
            <consortium name="The C. elegans sequencing consortium"/>
        </authorList>
    </citation>
    <scope>NUCLEOTIDE SEQUENCE [LARGE SCALE GENOMIC DNA]</scope>
    <source>
        <strain>Bristol N2</strain>
    </source>
</reference>
<name>COA8_CAEEL</name>
<accession>Q8MYM9</accession>
<feature type="transit peptide" description="Mitochondrion" evidence="3">
    <location>
        <begin position="1"/>
        <end status="unknown"/>
    </location>
</feature>
<feature type="chain" id="PRO_0000353112" description="COA8 family protein Y39B6A.34, mitochondrial">
    <location>
        <begin status="unknown"/>
        <end position="142"/>
    </location>
</feature>
<organism>
    <name type="scientific">Caenorhabditis elegans</name>
    <dbReference type="NCBI Taxonomy" id="6239"/>
    <lineage>
        <taxon>Eukaryota</taxon>
        <taxon>Metazoa</taxon>
        <taxon>Ecdysozoa</taxon>
        <taxon>Nematoda</taxon>
        <taxon>Chromadorea</taxon>
        <taxon>Rhabditida</taxon>
        <taxon>Rhabditina</taxon>
        <taxon>Rhabditomorpha</taxon>
        <taxon>Rhabditoidea</taxon>
        <taxon>Rhabditidae</taxon>
        <taxon>Peloderinae</taxon>
        <taxon>Caenorhabditis</taxon>
    </lineage>
</organism>
<protein>
    <recommendedName>
        <fullName evidence="4">COA8 family protein Y39B6A.34, mitochondrial</fullName>
        <shortName evidence="4">COA8</shortName>
    </recommendedName>
    <alternativeName>
        <fullName>APOPT family protein Y39B6A.34, mitochondrial</fullName>
    </alternativeName>
</protein>
<dbReference type="EMBL" id="AL132948">
    <property type="protein sequence ID" value="CAD31827.1"/>
    <property type="molecule type" value="Genomic_DNA"/>
</dbReference>
<dbReference type="RefSeq" id="NP_741663.1">
    <property type="nucleotide sequence ID" value="NM_171573.6"/>
</dbReference>
<dbReference type="SMR" id="Q8MYM9"/>
<dbReference type="BioGRID" id="45207">
    <property type="interactions" value="5"/>
</dbReference>
<dbReference type="DIP" id="DIP-26157N"/>
<dbReference type="FunCoup" id="Q8MYM9">
    <property type="interactions" value="2237"/>
</dbReference>
<dbReference type="STRING" id="6239.Y39B6A.34a.1"/>
<dbReference type="PaxDb" id="6239-Y39B6A.34a"/>
<dbReference type="PeptideAtlas" id="Q8MYM9"/>
<dbReference type="EnsemblMetazoa" id="Y39B6A.34a.1">
    <property type="protein sequence ID" value="Y39B6A.34a.1"/>
    <property type="gene ID" value="WBGene00012693"/>
</dbReference>
<dbReference type="GeneID" id="180245"/>
<dbReference type="KEGG" id="cel:CELE_Y39B6A.34"/>
<dbReference type="UCSC" id="Y39B6A.34">
    <property type="organism name" value="c. elegans"/>
</dbReference>
<dbReference type="AGR" id="WB:WBGene00012693"/>
<dbReference type="CTD" id="180245"/>
<dbReference type="WormBase" id="Y39B6A.34a">
    <property type="protein sequence ID" value="CE29872"/>
    <property type="gene ID" value="WBGene00012693"/>
</dbReference>
<dbReference type="eggNOG" id="KOG4094">
    <property type="taxonomic scope" value="Eukaryota"/>
</dbReference>
<dbReference type="GeneTree" id="ENSGT00390000008212"/>
<dbReference type="HOGENOM" id="CLU_118274_0_1_1"/>
<dbReference type="InParanoid" id="Q8MYM9"/>
<dbReference type="OMA" id="AWNQEFW"/>
<dbReference type="OrthoDB" id="6246201at2759"/>
<dbReference type="PhylomeDB" id="Q8MYM9"/>
<dbReference type="PRO" id="PR:Q8MYM9"/>
<dbReference type="Proteomes" id="UP000001940">
    <property type="component" value="Chromosome V"/>
</dbReference>
<dbReference type="Bgee" id="WBGene00012693">
    <property type="expression patterns" value="Expressed in pharyngeal muscle cell (C elegans) and 4 other cell types or tissues"/>
</dbReference>
<dbReference type="ExpressionAtlas" id="Q8MYM9">
    <property type="expression patterns" value="baseline and differential"/>
</dbReference>
<dbReference type="GO" id="GO:0005743">
    <property type="term" value="C:mitochondrial inner membrane"/>
    <property type="evidence" value="ECO:0007669"/>
    <property type="project" value="UniProtKB-SubCell"/>
</dbReference>
<dbReference type="GO" id="GO:0005739">
    <property type="term" value="C:mitochondrion"/>
    <property type="evidence" value="ECO:0000318"/>
    <property type="project" value="GO_Central"/>
</dbReference>
<dbReference type="GO" id="GO:0097193">
    <property type="term" value="P:intrinsic apoptotic signaling pathway"/>
    <property type="evidence" value="ECO:0007669"/>
    <property type="project" value="InterPro"/>
</dbReference>
<dbReference type="InterPro" id="IPR018796">
    <property type="entry name" value="COA8"/>
</dbReference>
<dbReference type="PANTHER" id="PTHR31107">
    <property type="entry name" value="APOPTOGENIC PROTEIN 1, MITOCHONDRIAL"/>
    <property type="match status" value="1"/>
</dbReference>
<dbReference type="PANTHER" id="PTHR31107:SF2">
    <property type="entry name" value="CYTOCHROME C OXIDASE ASSEMBLY FACTOR 8"/>
    <property type="match status" value="1"/>
</dbReference>
<dbReference type="Pfam" id="PF10231">
    <property type="entry name" value="COA8"/>
    <property type="match status" value="1"/>
</dbReference>
<sequence>MSSISSSSSNVRMDRRFDWVGPPDNLSKIRKIMLRRVDNESELERQYRLAREELNQWNSDFWAEHNQLFDRQKSDFVERKQQELGRLEHVSANELSEFYRDFLNDRHVAMMAYNKEWYRRNLQLIWPALKVNVVRFFRMARR</sequence>
<comment type="function">
    <text evidence="1">May be required for cytochrome c complex (COX) assembly and function, COX being the terminal component of the mitochondrial respiratory chain.</text>
</comment>
<comment type="subcellular location">
    <subcellularLocation>
        <location evidence="2">Mitochondrion inner membrane</location>
        <topology evidence="1">Peripheral membrane protein</topology>
        <orientation evidence="1">Matrix side</orientation>
    </subcellularLocation>
</comment>
<comment type="similarity">
    <text evidence="4">Belongs to the COA8 family.</text>
</comment>
<keyword id="KW-0053">Apoptosis</keyword>
<keyword id="KW-0472">Membrane</keyword>
<keyword id="KW-0496">Mitochondrion</keyword>
<keyword id="KW-0999">Mitochondrion inner membrane</keyword>
<keyword id="KW-1185">Reference proteome</keyword>
<keyword id="KW-0809">Transit peptide</keyword>